<comment type="function">
    <text evidence="1">Does not exhibit any ribonuclease activity.</text>
</comment>
<comment type="subcellular location">
    <subcellularLocation>
        <location evidence="3">Secreted</location>
    </subcellularLocation>
</comment>
<comment type="similarity">
    <text evidence="3">Belongs to the pancreatic ribonuclease family.</text>
</comment>
<keyword id="KW-1015">Disulfide bond</keyword>
<keyword id="KW-0325">Glycoprotein</keyword>
<keyword id="KW-0964">Secreted</keyword>
<keyword id="KW-0732">Signal</keyword>
<accession>Q7YRH0</accession>
<reference key="1">
    <citation type="submission" date="2003-06" db="EMBL/GenBank/DDBJ databases">
        <title>LOC122650 on chromosome 14q11.2 is related to the RNase A superfamily and contains a unique amino-terminal pre-protein-like domain.</title>
        <authorList>
            <person name="Devor E.J."/>
            <person name="Moffat-Wilson K.A."/>
        </authorList>
    </citation>
    <scope>NUCLEOTIDE SEQUENCE [GENOMIC DNA]</scope>
</reference>
<organism>
    <name type="scientific">Chlorocebus pygerythrus</name>
    <name type="common">Vervet monkey</name>
    <name type="synonym">Cercopithecus pygerythrus</name>
    <dbReference type="NCBI Taxonomy" id="60710"/>
    <lineage>
        <taxon>Eukaryota</taxon>
        <taxon>Metazoa</taxon>
        <taxon>Chordata</taxon>
        <taxon>Craniata</taxon>
        <taxon>Vertebrata</taxon>
        <taxon>Euteleostomi</taxon>
        <taxon>Mammalia</taxon>
        <taxon>Eutheria</taxon>
        <taxon>Euarchontoglires</taxon>
        <taxon>Primates</taxon>
        <taxon>Haplorrhini</taxon>
        <taxon>Catarrhini</taxon>
        <taxon>Cercopithecidae</taxon>
        <taxon>Cercopithecinae</taxon>
        <taxon>Chlorocebus</taxon>
    </lineage>
</organism>
<dbReference type="EMBL" id="AY330196">
    <property type="protein sequence ID" value="AAQ01506.1"/>
    <property type="molecule type" value="Genomic_DNA"/>
</dbReference>
<dbReference type="SMR" id="Q7YRH0"/>
<dbReference type="GlyCosmos" id="Q7YRH0">
    <property type="glycosylation" value="2 sites, No reported glycans"/>
</dbReference>
<dbReference type="GO" id="GO:0005576">
    <property type="term" value="C:extracellular region"/>
    <property type="evidence" value="ECO:0007669"/>
    <property type="project" value="UniProtKB-SubCell"/>
</dbReference>
<dbReference type="GO" id="GO:0003676">
    <property type="term" value="F:nucleic acid binding"/>
    <property type="evidence" value="ECO:0007669"/>
    <property type="project" value="InterPro"/>
</dbReference>
<dbReference type="GO" id="GO:0050830">
    <property type="term" value="P:defense response to Gram-positive bacterium"/>
    <property type="evidence" value="ECO:0007669"/>
    <property type="project" value="TreeGrafter"/>
</dbReference>
<dbReference type="CDD" id="cd00163">
    <property type="entry name" value="RNase_A"/>
    <property type="match status" value="1"/>
</dbReference>
<dbReference type="FunFam" id="3.10.130.10:FF:000003">
    <property type="entry name" value="Inactive ribonuclease-like protein 9"/>
    <property type="match status" value="1"/>
</dbReference>
<dbReference type="Gene3D" id="3.10.130.10">
    <property type="entry name" value="Ribonuclease A-like domain"/>
    <property type="match status" value="1"/>
</dbReference>
<dbReference type="InterPro" id="IPR001427">
    <property type="entry name" value="RNaseA"/>
</dbReference>
<dbReference type="InterPro" id="IPR036816">
    <property type="entry name" value="RNaseA-like_dom_sf"/>
</dbReference>
<dbReference type="InterPro" id="IPR023412">
    <property type="entry name" value="RNaseA_domain"/>
</dbReference>
<dbReference type="PANTHER" id="PTHR11437:SF14">
    <property type="entry name" value="INACTIVE RIBONUCLEASE-LIKE PROTEIN 9"/>
    <property type="match status" value="1"/>
</dbReference>
<dbReference type="PANTHER" id="PTHR11437">
    <property type="entry name" value="RIBONUCLEASE"/>
    <property type="match status" value="1"/>
</dbReference>
<dbReference type="Pfam" id="PF00074">
    <property type="entry name" value="RnaseA"/>
    <property type="match status" value="1"/>
</dbReference>
<dbReference type="SMART" id="SM00092">
    <property type="entry name" value="RNAse_Pc"/>
    <property type="match status" value="1"/>
</dbReference>
<dbReference type="SUPFAM" id="SSF54076">
    <property type="entry name" value="RNase A-like"/>
    <property type="match status" value="1"/>
</dbReference>
<gene>
    <name type="primary">RNASE9</name>
</gene>
<protein>
    <recommendedName>
        <fullName>Inactive ribonuclease-like protein 9</fullName>
    </recommendedName>
</protein>
<evidence type="ECO:0000250" key="1"/>
<evidence type="ECO:0000255" key="2"/>
<evidence type="ECO:0000305" key="3"/>
<feature type="signal peptide" evidence="2">
    <location>
        <begin position="1"/>
        <end position="26"/>
    </location>
</feature>
<feature type="chain" id="PRO_0000030949" description="Inactive ribonuclease-like protein 9">
    <location>
        <begin position="27"/>
        <end position="204"/>
    </location>
</feature>
<feature type="glycosylation site" description="N-linked (GlcNAc...) asparagine" evidence="2">
    <location>
        <position position="130"/>
    </location>
</feature>
<feature type="glycosylation site" description="N-linked (GlcNAc...) asparagine" evidence="2">
    <location>
        <position position="142"/>
    </location>
</feature>
<feature type="disulfide bond" evidence="1">
    <location>
        <begin position="97"/>
        <end position="152"/>
    </location>
</feature>
<feature type="disulfide bond" evidence="1">
    <location>
        <begin position="115"/>
        <end position="167"/>
    </location>
</feature>
<feature type="disulfide bond" evidence="1">
    <location>
        <begin position="122"/>
        <end position="129"/>
    </location>
</feature>
<name>RNAS9_CHLPG</name>
<proteinExistence type="inferred from homology"/>
<sequence>MMRTLITTHPLLLLLLLQQLLQPVQLQEVDTDFDSPDDEMEELEEYLEEFQSRGPTRPPTKENVERRVIIEPGMPLYDRDYCNEEIKRKNVYHKYRCVTEHYFLLMQYDELQKICYNRFVPCKNGVRKCNRSKGLVEGVYCNLTEALEIPGCEYKSFYRTGYVLITCAWQNEIHKLIPHTINDLVEPPKHRSFLNEDGVFVIPP</sequence>